<accession>Q6AMI5</accession>
<feature type="chain" id="PRO_0000267299" description="dTTP/UTP pyrophosphatase">
    <location>
        <begin position="1"/>
        <end position="195"/>
    </location>
</feature>
<feature type="active site" description="Proton acceptor" evidence="1">
    <location>
        <position position="73"/>
    </location>
</feature>
<feature type="site" description="Important for substrate specificity" evidence="1">
    <location>
        <position position="16"/>
    </location>
</feature>
<feature type="site" description="Important for substrate specificity" evidence="1">
    <location>
        <position position="74"/>
    </location>
</feature>
<feature type="site" description="Important for substrate specificity" evidence="1">
    <location>
        <position position="158"/>
    </location>
</feature>
<evidence type="ECO:0000255" key="1">
    <source>
        <dbReference type="HAMAP-Rule" id="MF_00528"/>
    </source>
</evidence>
<gene>
    <name type="ordered locus">DP1711</name>
</gene>
<name>NTPPA_DESPS</name>
<reference key="1">
    <citation type="journal article" date="2004" name="Environ. Microbiol.">
        <title>The genome of Desulfotalea psychrophila, a sulfate-reducing bacterium from permanently cold Arctic sediments.</title>
        <authorList>
            <person name="Rabus R."/>
            <person name="Ruepp A."/>
            <person name="Frickey T."/>
            <person name="Rattei T."/>
            <person name="Fartmann B."/>
            <person name="Stark M."/>
            <person name="Bauer M."/>
            <person name="Zibat A."/>
            <person name="Lombardot T."/>
            <person name="Becker I."/>
            <person name="Amann J."/>
            <person name="Gellner K."/>
            <person name="Teeling H."/>
            <person name="Leuschner W.D."/>
            <person name="Gloeckner F.-O."/>
            <person name="Lupas A.N."/>
            <person name="Amann R."/>
            <person name="Klenk H.-P."/>
        </authorList>
    </citation>
    <scope>NUCLEOTIDE SEQUENCE [LARGE SCALE GENOMIC DNA]</scope>
    <source>
        <strain>DSM 12343 / LSv54</strain>
    </source>
</reference>
<proteinExistence type="inferred from homology"/>
<comment type="function">
    <text evidence="1">Nucleoside triphosphate pyrophosphatase that hydrolyzes dTTP and UTP. May have a dual role in cell division arrest and in preventing the incorporation of modified nucleotides into cellular nucleic acids.</text>
</comment>
<comment type="catalytic activity">
    <reaction evidence="1">
        <text>dTTP + H2O = dTMP + diphosphate + H(+)</text>
        <dbReference type="Rhea" id="RHEA:28534"/>
        <dbReference type="ChEBI" id="CHEBI:15377"/>
        <dbReference type="ChEBI" id="CHEBI:15378"/>
        <dbReference type="ChEBI" id="CHEBI:33019"/>
        <dbReference type="ChEBI" id="CHEBI:37568"/>
        <dbReference type="ChEBI" id="CHEBI:63528"/>
        <dbReference type="EC" id="3.6.1.9"/>
    </reaction>
</comment>
<comment type="catalytic activity">
    <reaction evidence="1">
        <text>UTP + H2O = UMP + diphosphate + H(+)</text>
        <dbReference type="Rhea" id="RHEA:29395"/>
        <dbReference type="ChEBI" id="CHEBI:15377"/>
        <dbReference type="ChEBI" id="CHEBI:15378"/>
        <dbReference type="ChEBI" id="CHEBI:33019"/>
        <dbReference type="ChEBI" id="CHEBI:46398"/>
        <dbReference type="ChEBI" id="CHEBI:57865"/>
        <dbReference type="EC" id="3.6.1.9"/>
    </reaction>
</comment>
<comment type="cofactor">
    <cofactor evidence="1">
        <name>a divalent metal cation</name>
        <dbReference type="ChEBI" id="CHEBI:60240"/>
    </cofactor>
</comment>
<comment type="subcellular location">
    <subcellularLocation>
        <location evidence="1">Cytoplasm</location>
    </subcellularLocation>
</comment>
<comment type="similarity">
    <text evidence="1">Belongs to the Maf family. YhdE subfamily.</text>
</comment>
<sequence length="195" mass="21383">MYKCDKPLILASSSPRRKAFLDQLGLEYSVRVKSIDEFAQPEESPEAFVCRMALEKGSAVSYQHPDSWVIAADTIVCLDQKILGKPRDSEDAVAMLCRLAGRSHTVMTAFAIICEKEKISEVQLVETSVYFSSFGEVEARAYVATGEPLDKAGSYGIQGVGALFVRKIAGSYSNVVGLPLAELVERLLYYSVISI</sequence>
<protein>
    <recommendedName>
        <fullName evidence="1">dTTP/UTP pyrophosphatase</fullName>
        <shortName evidence="1">dTTPase/UTPase</shortName>
        <ecNumber evidence="1">3.6.1.9</ecNumber>
    </recommendedName>
    <alternativeName>
        <fullName evidence="1">Nucleoside triphosphate pyrophosphatase</fullName>
    </alternativeName>
    <alternativeName>
        <fullName evidence="1">Nucleotide pyrophosphatase</fullName>
        <shortName evidence="1">Nucleotide PPase</shortName>
    </alternativeName>
</protein>
<organism>
    <name type="scientific">Desulfotalea psychrophila (strain LSv54 / DSM 12343)</name>
    <dbReference type="NCBI Taxonomy" id="177439"/>
    <lineage>
        <taxon>Bacteria</taxon>
        <taxon>Pseudomonadati</taxon>
        <taxon>Thermodesulfobacteriota</taxon>
        <taxon>Desulfobulbia</taxon>
        <taxon>Desulfobulbales</taxon>
        <taxon>Desulfocapsaceae</taxon>
        <taxon>Desulfotalea</taxon>
    </lineage>
</organism>
<keyword id="KW-0963">Cytoplasm</keyword>
<keyword id="KW-0378">Hydrolase</keyword>
<keyword id="KW-0546">Nucleotide metabolism</keyword>
<keyword id="KW-1185">Reference proteome</keyword>
<dbReference type="EC" id="3.6.1.9" evidence="1"/>
<dbReference type="EMBL" id="CR522870">
    <property type="protein sequence ID" value="CAG36440.1"/>
    <property type="molecule type" value="Genomic_DNA"/>
</dbReference>
<dbReference type="RefSeq" id="WP_011188952.1">
    <property type="nucleotide sequence ID" value="NC_006138.1"/>
</dbReference>
<dbReference type="SMR" id="Q6AMI5"/>
<dbReference type="STRING" id="177439.DP1711"/>
<dbReference type="KEGG" id="dps:DP1711"/>
<dbReference type="eggNOG" id="COG0424">
    <property type="taxonomic scope" value="Bacteria"/>
</dbReference>
<dbReference type="HOGENOM" id="CLU_040416_0_0_7"/>
<dbReference type="OrthoDB" id="9807767at2"/>
<dbReference type="Proteomes" id="UP000000602">
    <property type="component" value="Chromosome"/>
</dbReference>
<dbReference type="GO" id="GO:0005737">
    <property type="term" value="C:cytoplasm"/>
    <property type="evidence" value="ECO:0007669"/>
    <property type="project" value="UniProtKB-SubCell"/>
</dbReference>
<dbReference type="GO" id="GO:0036218">
    <property type="term" value="F:dTTP diphosphatase activity"/>
    <property type="evidence" value="ECO:0007669"/>
    <property type="project" value="RHEA"/>
</dbReference>
<dbReference type="GO" id="GO:0036221">
    <property type="term" value="F:UTP diphosphatase activity"/>
    <property type="evidence" value="ECO:0007669"/>
    <property type="project" value="RHEA"/>
</dbReference>
<dbReference type="GO" id="GO:0009117">
    <property type="term" value="P:nucleotide metabolic process"/>
    <property type="evidence" value="ECO:0007669"/>
    <property type="project" value="UniProtKB-KW"/>
</dbReference>
<dbReference type="CDD" id="cd00555">
    <property type="entry name" value="Maf"/>
    <property type="match status" value="1"/>
</dbReference>
<dbReference type="Gene3D" id="3.90.950.10">
    <property type="match status" value="1"/>
</dbReference>
<dbReference type="HAMAP" id="MF_00528">
    <property type="entry name" value="Maf"/>
    <property type="match status" value="1"/>
</dbReference>
<dbReference type="InterPro" id="IPR029001">
    <property type="entry name" value="ITPase-like_fam"/>
</dbReference>
<dbReference type="InterPro" id="IPR003697">
    <property type="entry name" value="Maf-like"/>
</dbReference>
<dbReference type="NCBIfam" id="TIGR00172">
    <property type="entry name" value="maf"/>
    <property type="match status" value="1"/>
</dbReference>
<dbReference type="PANTHER" id="PTHR43213">
    <property type="entry name" value="BIFUNCTIONAL DTTP/UTP PYROPHOSPHATASE/METHYLTRANSFERASE PROTEIN-RELATED"/>
    <property type="match status" value="1"/>
</dbReference>
<dbReference type="PANTHER" id="PTHR43213:SF5">
    <property type="entry name" value="BIFUNCTIONAL DTTP_UTP PYROPHOSPHATASE_METHYLTRANSFERASE PROTEIN-RELATED"/>
    <property type="match status" value="1"/>
</dbReference>
<dbReference type="Pfam" id="PF02545">
    <property type="entry name" value="Maf"/>
    <property type="match status" value="1"/>
</dbReference>
<dbReference type="PIRSF" id="PIRSF006305">
    <property type="entry name" value="Maf"/>
    <property type="match status" value="1"/>
</dbReference>
<dbReference type="SUPFAM" id="SSF52972">
    <property type="entry name" value="ITPase-like"/>
    <property type="match status" value="1"/>
</dbReference>